<name>RS9_GEOSE</name>
<gene>
    <name type="primary">rpsI</name>
</gene>
<reference key="1">
    <citation type="journal article" date="1984" name="Eur. J. Biochem.">
        <title>The complete amino acid sequences of ribosomal proteins L17, L27, and S9 from Bacillus stearothermophilus.</title>
        <authorList>
            <person name="Kimura M."/>
            <person name="Chow C.K."/>
        </authorList>
    </citation>
    <scope>PROTEIN SEQUENCE OF 2-130</scope>
    <source>
        <strain>ATCC 29609 / DSM 2027 / NCA 1503 / NCIMB 8924</strain>
    </source>
</reference>
<reference key="2">
    <citation type="journal article" date="1974" name="FEBS Lett.">
        <title>Procaryotic ribosomal proteins: N-terminal sequence homologies and structural correspondence of 30 S ribosomal proteins from Escherichia coli and Bacillus stearothermophilus.</title>
        <authorList>
            <person name="Yaguchi M."/>
            <person name="Matheson A.T."/>
            <person name="Visentin L.P."/>
        </authorList>
    </citation>
    <scope>PROTEIN SEQUENCE OF 2-16</scope>
    <source>
        <strain>DSM 13240 / CIP 106956 / 10</strain>
    </source>
</reference>
<keyword id="KW-0903">Direct protein sequencing</keyword>
<keyword id="KW-0687">Ribonucleoprotein</keyword>
<keyword id="KW-0689">Ribosomal protein</keyword>
<organism>
    <name type="scientific">Geobacillus stearothermophilus</name>
    <name type="common">Bacillus stearothermophilus</name>
    <dbReference type="NCBI Taxonomy" id="1422"/>
    <lineage>
        <taxon>Bacteria</taxon>
        <taxon>Bacillati</taxon>
        <taxon>Bacillota</taxon>
        <taxon>Bacilli</taxon>
        <taxon>Bacillales</taxon>
        <taxon>Anoxybacillaceae</taxon>
        <taxon>Geobacillus</taxon>
    </lineage>
</organism>
<feature type="initiator methionine" description="Removed" evidence="1 2">
    <location>
        <position position="1"/>
    </location>
</feature>
<feature type="chain" id="PRO_0000111325" description="Small ribosomal subunit protein uS9">
    <location>
        <begin position="2"/>
        <end position="130"/>
    </location>
</feature>
<proteinExistence type="evidence at protein level"/>
<sequence length="130" mass="14471">MAQVQYYGTGRRKSSVARVRLVPGDGRIIVNKQDIREYIPTEALIEMVKQPLVLTETLGSYDVLVNVHGGGFAGQAGAIRHGIARALLQVDPEFRTVLKRAGLLTRDARVKERKKYGLKGARRAPQFSKR</sequence>
<dbReference type="PIR" id="S08564">
    <property type="entry name" value="R3BS9"/>
</dbReference>
<dbReference type="RefSeq" id="WP_033008697.1">
    <property type="nucleotide sequence ID" value="NZ_RCTK01000011.1"/>
</dbReference>
<dbReference type="SMR" id="P07842"/>
<dbReference type="GeneID" id="89612866"/>
<dbReference type="GO" id="GO:0022627">
    <property type="term" value="C:cytosolic small ribosomal subunit"/>
    <property type="evidence" value="ECO:0007669"/>
    <property type="project" value="TreeGrafter"/>
</dbReference>
<dbReference type="GO" id="GO:0003723">
    <property type="term" value="F:RNA binding"/>
    <property type="evidence" value="ECO:0007669"/>
    <property type="project" value="TreeGrafter"/>
</dbReference>
<dbReference type="GO" id="GO:0003735">
    <property type="term" value="F:structural constituent of ribosome"/>
    <property type="evidence" value="ECO:0007669"/>
    <property type="project" value="InterPro"/>
</dbReference>
<dbReference type="GO" id="GO:0006412">
    <property type="term" value="P:translation"/>
    <property type="evidence" value="ECO:0007669"/>
    <property type="project" value="UniProtKB-UniRule"/>
</dbReference>
<dbReference type="FunFam" id="3.30.230.10:FF:000001">
    <property type="entry name" value="30S ribosomal protein S9"/>
    <property type="match status" value="1"/>
</dbReference>
<dbReference type="Gene3D" id="3.30.230.10">
    <property type="match status" value="1"/>
</dbReference>
<dbReference type="HAMAP" id="MF_00532_B">
    <property type="entry name" value="Ribosomal_uS9_B"/>
    <property type="match status" value="1"/>
</dbReference>
<dbReference type="InterPro" id="IPR020568">
    <property type="entry name" value="Ribosomal_Su5_D2-typ_SF"/>
</dbReference>
<dbReference type="InterPro" id="IPR000754">
    <property type="entry name" value="Ribosomal_uS9"/>
</dbReference>
<dbReference type="InterPro" id="IPR023035">
    <property type="entry name" value="Ribosomal_uS9_bac/plastid"/>
</dbReference>
<dbReference type="InterPro" id="IPR020574">
    <property type="entry name" value="Ribosomal_uS9_CS"/>
</dbReference>
<dbReference type="InterPro" id="IPR014721">
    <property type="entry name" value="Ribsml_uS5_D2-typ_fold_subgr"/>
</dbReference>
<dbReference type="NCBIfam" id="NF001099">
    <property type="entry name" value="PRK00132.1"/>
    <property type="match status" value="1"/>
</dbReference>
<dbReference type="PANTHER" id="PTHR21569">
    <property type="entry name" value="RIBOSOMAL PROTEIN S9"/>
    <property type="match status" value="1"/>
</dbReference>
<dbReference type="PANTHER" id="PTHR21569:SF1">
    <property type="entry name" value="SMALL RIBOSOMAL SUBUNIT PROTEIN US9M"/>
    <property type="match status" value="1"/>
</dbReference>
<dbReference type="Pfam" id="PF00380">
    <property type="entry name" value="Ribosomal_S9"/>
    <property type="match status" value="1"/>
</dbReference>
<dbReference type="SUPFAM" id="SSF54211">
    <property type="entry name" value="Ribosomal protein S5 domain 2-like"/>
    <property type="match status" value="1"/>
</dbReference>
<dbReference type="PROSITE" id="PS00360">
    <property type="entry name" value="RIBOSOMAL_S9"/>
    <property type="match status" value="1"/>
</dbReference>
<accession>P07842</accession>
<comment type="similarity">
    <text evidence="3">Belongs to the universal ribosomal protein uS9 family.</text>
</comment>
<evidence type="ECO:0000269" key="1">
    <source>
    </source>
</evidence>
<evidence type="ECO:0000269" key="2">
    <source>
    </source>
</evidence>
<evidence type="ECO:0000305" key="3"/>
<protein>
    <recommendedName>
        <fullName evidence="3">Small ribosomal subunit protein uS9</fullName>
    </recommendedName>
    <alternativeName>
        <fullName>30S ribosomal protein S9</fullName>
    </alternativeName>
    <alternativeName>
        <fullName>BS10</fullName>
    </alternativeName>
</protein>